<sequence length="600" mass="66636">MAVSTQQLAEELQIFGLDCEDSLLEKLAELCTLYRQTEERMVSELIAFCTSAGKSCLTGEILSSFEHEVLNKKLSKACHSASKDNRHAGARDIVSIQELIEAEEEEETLLSAYTTPSKGPHKRVSSTPETPLTKRSISTRSPHQLLSPSSFSPSATPSQKYSSRTNRGEVVTTFGSAQGVSWSGRGGSGSISLKVMGYPEPLTSSYKTMFQQLPDIREVLTCKIEELGSELKEHYKIEAFTPLLVPAQEPVILLGQIGCDSNGRLNSKSVILEGDREHSSGAQIPVDVSELKDYSLFPGQVVIMEGFNTTGRRLTATKLYEGVPLPFYQPTEEEGDFEQTMVLVACGPYTTSDSITYDPLLDLISTINHDRPDVCILFGPFLDAKHEQVENCKLTSPFEDIFKQCLRTVIEGTRSSGSHLVFVPSLRDVHHEPVYPQPPFTFSELPREDKKRVQFVSEPCNLSINGVMFGLTSTDLLFHIGAEEICSSSGTSDRFSRILKHILTQRSYYPLYPPHEDMAIDYENFYTYAQLPVTPDVFIVPSELRYFVKDIFGCVCMNPGRLTKGQVGGTFGRLYLRRQPKGTDSEGRQGLSVAAQVVRI</sequence>
<protein>
    <recommendedName>
        <fullName>DNA polymerase alpha subunit B</fullName>
    </recommendedName>
    <alternativeName>
        <fullName>DNA polymerase alpha 70 kDa subunit</fullName>
    </alternativeName>
    <alternativeName>
        <fullName>DNA polymerase subunit II</fullName>
    </alternativeName>
</protein>
<reference key="1">
    <citation type="journal article" date="2001" name="Mol. Carcinog.">
        <title>A mutation in subunit B of the DNA polymerase alpha-primase complex from Novikoff hepatoma cells concomitant with a conformational change and abnormal catalytic properties of the DNA polymerase alpha-primase complex.</title>
        <authorList>
            <person name="Popanda O."/>
            <person name="Flohr C."/>
            <person name="Dai J.C."/>
            <person name="Hunzicker A."/>
            <person name="Thielmann H.W."/>
        </authorList>
    </citation>
    <scope>NUCLEOTIDE SEQUENCE [MRNA]</scope>
    <source>
        <strain>Sprague-Dawley</strain>
        <tissue>Liver</tissue>
    </source>
</reference>
<reference key="2">
    <citation type="journal article" date="1999" name="J. Cancer Res. Clin. Oncol.">
        <title>A mutation detected in DNA polymerase delta cDNA from Novikoff hepatoma cells correlates with abnormal catalytic properties of the enzyme.</title>
        <authorList>
            <person name="Popanda O."/>
            <person name="Flohr T."/>
            <person name="Fox G."/>
            <person name="Thielmann H.W."/>
        </authorList>
    </citation>
    <scope>NUCLEOTIDE SEQUENCE [MRNA] OF 106-600</scope>
    <source>
        <strain>Sprague-Dawley</strain>
        <tissue>Liver</tissue>
    </source>
</reference>
<reference key="3">
    <citation type="journal article" date="2012" name="Nat. Commun.">
        <title>Quantitative maps of protein phosphorylation sites across 14 different rat organs and tissues.</title>
        <authorList>
            <person name="Lundby A."/>
            <person name="Secher A."/>
            <person name="Lage K."/>
            <person name="Nordsborg N.B."/>
            <person name="Dmytriyev A."/>
            <person name="Lundby C."/>
            <person name="Olsen J.V."/>
        </authorList>
    </citation>
    <scope>PHOSPHORYLATION [LARGE SCALE ANALYSIS] AT THR-130; SER-141 AND SER-152</scope>
    <scope>IDENTIFICATION BY MASS SPECTROMETRY [LARGE SCALE ANALYSIS]</scope>
</reference>
<evidence type="ECO:0000250" key="1"/>
<evidence type="ECO:0000250" key="2">
    <source>
        <dbReference type="UniProtKB" id="P09884"/>
    </source>
</evidence>
<evidence type="ECO:0000250" key="3">
    <source>
        <dbReference type="UniProtKB" id="P20664"/>
    </source>
</evidence>
<evidence type="ECO:0000250" key="4">
    <source>
        <dbReference type="UniProtKB" id="Q14181"/>
    </source>
</evidence>
<evidence type="ECO:0000256" key="5">
    <source>
        <dbReference type="SAM" id="MobiDB-lite"/>
    </source>
</evidence>
<evidence type="ECO:0000305" key="6"/>
<evidence type="ECO:0007744" key="7">
    <source>
    </source>
</evidence>
<proteinExistence type="evidence at protein level"/>
<keyword id="KW-0235">DNA replication</keyword>
<keyword id="KW-0539">Nucleus</keyword>
<keyword id="KW-0597">Phosphoprotein</keyword>
<keyword id="KW-1185">Reference proteome</keyword>
<accession>O89043</accession>
<accession>Q9QYV6</accession>
<gene>
    <name type="primary">Pola2</name>
</gene>
<name>DPOA2_RAT</name>
<feature type="chain" id="PRO_0000194037" description="DNA polymerase alpha subunit B">
    <location>
        <begin position="1"/>
        <end position="600"/>
    </location>
</feature>
<feature type="region of interest" description="Disordered" evidence="5">
    <location>
        <begin position="112"/>
        <end position="167"/>
    </location>
</feature>
<feature type="compositionally biased region" description="Polar residues" evidence="5">
    <location>
        <begin position="125"/>
        <end position="140"/>
    </location>
</feature>
<feature type="compositionally biased region" description="Low complexity" evidence="5">
    <location>
        <begin position="141"/>
        <end position="158"/>
    </location>
</feature>
<feature type="modified residue" description="Phosphoserine" evidence="4">
    <location>
        <position position="126"/>
    </location>
</feature>
<feature type="modified residue" description="Phosphothreonine" evidence="4">
    <location>
        <position position="127"/>
    </location>
</feature>
<feature type="modified residue" description="Phosphothreonine" evidence="7">
    <location>
        <position position="130"/>
    </location>
</feature>
<feature type="modified residue" description="Phosphoserine" evidence="7">
    <location>
        <position position="141"/>
    </location>
</feature>
<feature type="modified residue" description="Phosphoserine" evidence="4">
    <location>
        <position position="147"/>
    </location>
</feature>
<feature type="modified residue" description="Phosphoserine" evidence="7">
    <location>
        <position position="152"/>
    </location>
</feature>
<feature type="modified residue" description="Phosphoserine" evidence="4">
    <location>
        <position position="154"/>
    </location>
</feature>
<feature type="sequence conflict" description="In Ref. 2; CAA09721." evidence="6" ref="2">
    <original>A</original>
    <variation>S</variation>
    <location>
        <position position="112"/>
    </location>
</feature>
<feature type="sequence conflict" description="In Ref. 2; CAA09721." evidence="6" ref="2">
    <original>R</original>
    <variation>K</variation>
    <location>
        <position position="264"/>
    </location>
</feature>
<feature type="sequence conflict" description="In Ref. 2; CAA09721." evidence="6" ref="2">
    <original>N</original>
    <variation>S</variation>
    <location>
        <position position="461"/>
    </location>
</feature>
<comment type="function">
    <text evidence="2 3 4">Accessory subunit of the DNA polymerase alpha complex (also known as the alpha DNA polymerase-primase complex) which plays an essential role in the initiation of DNA synthesis (By similarity). During the S phase of the cell cycle, the DNA polymerase alpha complex (composed of a catalytic subunit POLA1, an accessory subunit POLA2 and two primase subunits, the catalytic subunit PRIM1 and the regulatory subunit PRIM2) is recruited to DNA at the replicative forks via direct interactions with MCM10 and WDHD1 (By similarity). The primase subunit of the polymerase alpha complex initiates DNA synthesis by oligomerising short RNA primers on both leading and lagging strands. These primers are initially extended by the polymerase alpha catalytic subunit and subsequently transferred to polymerase delta and polymerase epsilon for processive synthesis on the lagging and leading strand, respectively (By similarity).</text>
</comment>
<comment type="subunit">
    <text evidence="3 4">Component of the alpha DNA polymerase complex (also known as the alpha DNA polymerase-primase complex) consisting of four subunits: the catalytic subunit POLA1, the regulatory subunit POLA2, and the primase complex subunits PRIM1 and PRIM2 respectively (By similarity). Within the complex, POLA1 directly interacts with PRIM2 (By similarity).</text>
</comment>
<comment type="subcellular location">
    <subcellularLocation>
        <location>Nucleus</location>
    </subcellularLocation>
</comment>
<comment type="PTM">
    <text evidence="1">Phosphorylated in a cell cycle-dependent manner, in G2/M phase.</text>
</comment>
<comment type="similarity">
    <text evidence="6">Belongs to the DNA polymerase alpha subunit B family.</text>
</comment>
<organism>
    <name type="scientific">Rattus norvegicus</name>
    <name type="common">Rat</name>
    <dbReference type="NCBI Taxonomy" id="10116"/>
    <lineage>
        <taxon>Eukaryota</taxon>
        <taxon>Metazoa</taxon>
        <taxon>Chordata</taxon>
        <taxon>Craniata</taxon>
        <taxon>Vertebrata</taxon>
        <taxon>Euteleostomi</taxon>
        <taxon>Mammalia</taxon>
        <taxon>Eutheria</taxon>
        <taxon>Euarchontoglires</taxon>
        <taxon>Glires</taxon>
        <taxon>Rodentia</taxon>
        <taxon>Myomorpha</taxon>
        <taxon>Muroidea</taxon>
        <taxon>Muridae</taxon>
        <taxon>Murinae</taxon>
        <taxon>Rattus</taxon>
    </lineage>
</organism>
<dbReference type="EMBL" id="AJ245648">
    <property type="protein sequence ID" value="CAB56208.1"/>
    <property type="molecule type" value="mRNA"/>
</dbReference>
<dbReference type="EMBL" id="AJ011606">
    <property type="protein sequence ID" value="CAA09721.1"/>
    <property type="molecule type" value="mRNA"/>
</dbReference>
<dbReference type="SMR" id="O89043"/>
<dbReference type="ComplexPortal" id="CPX-2089">
    <property type="entry name" value="DNA polymerase alpha:primase complex"/>
</dbReference>
<dbReference type="FunCoup" id="O89043">
    <property type="interactions" value="1785"/>
</dbReference>
<dbReference type="STRING" id="10116.ENSRNOP00000028406"/>
<dbReference type="GlyGen" id="O89043">
    <property type="glycosylation" value="1 site"/>
</dbReference>
<dbReference type="iPTMnet" id="O89043"/>
<dbReference type="PhosphoSitePlus" id="O89043"/>
<dbReference type="jPOST" id="O89043"/>
<dbReference type="PaxDb" id="10116-ENSRNOP00000028406"/>
<dbReference type="UCSC" id="RGD:621817">
    <property type="organism name" value="rat"/>
</dbReference>
<dbReference type="AGR" id="RGD:621817"/>
<dbReference type="RGD" id="621817">
    <property type="gene designation" value="Pola2"/>
</dbReference>
<dbReference type="eggNOG" id="KOG1625">
    <property type="taxonomic scope" value="Eukaryota"/>
</dbReference>
<dbReference type="InParanoid" id="O89043"/>
<dbReference type="PhylomeDB" id="O89043"/>
<dbReference type="Reactome" id="R-RNO-113501">
    <property type="pathway name" value="Inhibition of replication initiation of damaged DNA by RB1/E2F1"/>
</dbReference>
<dbReference type="Reactome" id="R-RNO-174411">
    <property type="pathway name" value="Polymerase switching on the C-strand of the telomere"/>
</dbReference>
<dbReference type="Reactome" id="R-RNO-174430">
    <property type="pathway name" value="Telomere C-strand synthesis initiation"/>
</dbReference>
<dbReference type="Reactome" id="R-RNO-68952">
    <property type="pathway name" value="DNA replication initiation"/>
</dbReference>
<dbReference type="Reactome" id="R-RNO-68962">
    <property type="pathway name" value="Activation of the pre-replicative complex"/>
</dbReference>
<dbReference type="Reactome" id="R-RNO-69091">
    <property type="pathway name" value="Polymerase switching"/>
</dbReference>
<dbReference type="Reactome" id="R-RNO-69166">
    <property type="pathway name" value="Removal of the Flap Intermediate"/>
</dbReference>
<dbReference type="Reactome" id="R-RNO-69183">
    <property type="pathway name" value="Processive synthesis on the lagging strand"/>
</dbReference>
<dbReference type="PRO" id="PR:O89043"/>
<dbReference type="Proteomes" id="UP000002494">
    <property type="component" value="Unplaced"/>
</dbReference>
<dbReference type="GO" id="GO:0005658">
    <property type="term" value="C:alpha DNA polymerase:primase complex"/>
    <property type="evidence" value="ECO:0000250"/>
    <property type="project" value="UniProtKB"/>
</dbReference>
<dbReference type="GO" id="GO:0005634">
    <property type="term" value="C:nucleus"/>
    <property type="evidence" value="ECO:0000266"/>
    <property type="project" value="RGD"/>
</dbReference>
<dbReference type="GO" id="GO:0003677">
    <property type="term" value="F:DNA binding"/>
    <property type="evidence" value="ECO:0007669"/>
    <property type="project" value="InterPro"/>
</dbReference>
<dbReference type="GO" id="GO:0003887">
    <property type="term" value="F:DNA-directed DNA polymerase activity"/>
    <property type="evidence" value="ECO:0000315"/>
    <property type="project" value="RGD"/>
</dbReference>
<dbReference type="GO" id="GO:0006260">
    <property type="term" value="P:DNA replication"/>
    <property type="evidence" value="ECO:0000315"/>
    <property type="project" value="RGD"/>
</dbReference>
<dbReference type="GO" id="GO:0006270">
    <property type="term" value="P:DNA replication initiation"/>
    <property type="evidence" value="ECO:0000266"/>
    <property type="project" value="RGD"/>
</dbReference>
<dbReference type="GO" id="GO:0006269">
    <property type="term" value="P:DNA replication, synthesis of primer"/>
    <property type="evidence" value="ECO:0000266"/>
    <property type="project" value="RGD"/>
</dbReference>
<dbReference type="GO" id="GO:0006606">
    <property type="term" value="P:protein import into nucleus"/>
    <property type="evidence" value="ECO:0000266"/>
    <property type="project" value="RGD"/>
</dbReference>
<dbReference type="FunFam" id="1.10.8.530:FF:000001">
    <property type="entry name" value="DNA polymerase alpha subunit B"/>
    <property type="match status" value="1"/>
</dbReference>
<dbReference type="FunFam" id="3.60.21.60:FF:000002">
    <property type="entry name" value="DNA polymerase alpha subunit B"/>
    <property type="match status" value="1"/>
</dbReference>
<dbReference type="FunFam" id="3.60.21.60:FF:000003">
    <property type="entry name" value="DNA polymerase alpha subunit B"/>
    <property type="match status" value="1"/>
</dbReference>
<dbReference type="Gene3D" id="3.60.21.60">
    <property type="match status" value="2"/>
</dbReference>
<dbReference type="Gene3D" id="1.10.8.530">
    <property type="entry name" value="DNA polymerase alpha-primase, subunit B, N-terminal domain"/>
    <property type="match status" value="1"/>
</dbReference>
<dbReference type="InterPro" id="IPR007185">
    <property type="entry name" value="DNA_pol_a/d/e_bsu"/>
</dbReference>
<dbReference type="InterPro" id="IPR043034">
    <property type="entry name" value="DNA_pol_alpha_B_N_sf"/>
</dbReference>
<dbReference type="InterPro" id="IPR016722">
    <property type="entry name" value="DNA_pol_alpha_bsu"/>
</dbReference>
<dbReference type="InterPro" id="IPR054300">
    <property type="entry name" value="DPOA2_OB"/>
</dbReference>
<dbReference type="InterPro" id="IPR013627">
    <property type="entry name" value="Pol_alpha_B_N"/>
</dbReference>
<dbReference type="PANTHER" id="PTHR23061">
    <property type="entry name" value="DNA POLYMERASE 2 ALPHA 70 KDA SUBUNIT"/>
    <property type="match status" value="1"/>
</dbReference>
<dbReference type="PANTHER" id="PTHR23061:SF12">
    <property type="entry name" value="DNA POLYMERASE ALPHA SUBUNIT B"/>
    <property type="match status" value="1"/>
</dbReference>
<dbReference type="Pfam" id="PF04042">
    <property type="entry name" value="DNA_pol_E_B"/>
    <property type="match status" value="1"/>
</dbReference>
<dbReference type="Pfam" id="PF22062">
    <property type="entry name" value="DPOA2_OB"/>
    <property type="match status" value="1"/>
</dbReference>
<dbReference type="Pfam" id="PF08418">
    <property type="entry name" value="Pol_alpha_B_N"/>
    <property type="match status" value="1"/>
</dbReference>
<dbReference type="PIRSF" id="PIRSF018300">
    <property type="entry name" value="DNA_pol_alph_2"/>
    <property type="match status" value="1"/>
</dbReference>